<reference key="1">
    <citation type="journal article" date="2009" name="Environ. Microbiol.">
        <title>Contribution of mobile genetic elements to Desulfovibrio vulgaris genome plasticity.</title>
        <authorList>
            <person name="Walker C.B."/>
            <person name="Stolyar S."/>
            <person name="Chivian D."/>
            <person name="Pinel N."/>
            <person name="Gabster J.A."/>
            <person name="Dehal P.S."/>
            <person name="He Z."/>
            <person name="Yang Z.K."/>
            <person name="Yen H.C."/>
            <person name="Zhou J."/>
            <person name="Wall J.D."/>
            <person name="Hazen T.C."/>
            <person name="Arkin A.P."/>
            <person name="Stahl D.A."/>
        </authorList>
    </citation>
    <scope>NUCLEOTIDE SEQUENCE [LARGE SCALE GENOMIC DNA]</scope>
    <source>
        <strain>DP4</strain>
    </source>
</reference>
<feature type="chain" id="PRO_1000015828" description="Glutamyl-tRNA(Gln) amidotransferase subunit A">
    <location>
        <begin position="1"/>
        <end position="489"/>
    </location>
</feature>
<feature type="active site" description="Charge relay system" evidence="1">
    <location>
        <position position="78"/>
    </location>
</feature>
<feature type="active site" description="Charge relay system" evidence="1">
    <location>
        <position position="153"/>
    </location>
</feature>
<feature type="active site" description="Acyl-ester intermediate" evidence="1">
    <location>
        <position position="177"/>
    </location>
</feature>
<keyword id="KW-0067">ATP-binding</keyword>
<keyword id="KW-0436">Ligase</keyword>
<keyword id="KW-0547">Nucleotide-binding</keyword>
<keyword id="KW-0648">Protein biosynthesis</keyword>
<sequence length="489" mass="51621">MSALHTLSLAAIRDALARREVRAEDAVLDCLARIETTEPRIDALLHLRAEAAIEEARALDAAGPDASRPLWGVPVTVKDALTTAGTPTTAGSRILEDFVPFYDAFAVQRLREAGAIILGKNNMDEFAMGSSTENSAYKPTRNPWDTARVPGGSSGGSAASVAAGQCFASLGTDTGGSIRQPASLCGCVGLKPTYGRVSRFGLIAYGSSLDQIGPMTRTVEDAAIVMGVIAGHDKRDSTCADRPVEDFAAALASRHDLAGVRIGVPAEFWGEGLSPEVATSCRAALDAARDLGATIVDVALPHTPQSIAAYYIVASAEASSNLARYDGVRYGKRAHAPEDLMDLYVRSRSEGLGDEVQRRIMLGTYVLSSGYYDAYYRKAAQVRRRILEDYRNAFATCDVICGPVSPVTAWPLGALTADPLQMYLMDVFTLSLNLAGLPGLSLPVGLGTESGMPVGIQLLGRSFDEATLLSVGNVLSRALPPLGSPAGLR</sequence>
<proteinExistence type="inferred from homology"/>
<accession>A1VFG9</accession>
<evidence type="ECO:0000255" key="1">
    <source>
        <dbReference type="HAMAP-Rule" id="MF_00120"/>
    </source>
</evidence>
<gene>
    <name evidence="1" type="primary">gatA</name>
    <name type="ordered locus">Dvul_2169</name>
</gene>
<dbReference type="EC" id="6.3.5.7" evidence="1"/>
<dbReference type="EMBL" id="CP000527">
    <property type="protein sequence ID" value="ABM29185.1"/>
    <property type="molecule type" value="Genomic_DNA"/>
</dbReference>
<dbReference type="RefSeq" id="WP_011792698.1">
    <property type="nucleotide sequence ID" value="NC_008751.1"/>
</dbReference>
<dbReference type="SMR" id="A1VFG9"/>
<dbReference type="KEGG" id="dvl:Dvul_2169"/>
<dbReference type="HOGENOM" id="CLU_009600_0_3_7"/>
<dbReference type="Proteomes" id="UP000009173">
    <property type="component" value="Chromosome"/>
</dbReference>
<dbReference type="GO" id="GO:0030956">
    <property type="term" value="C:glutamyl-tRNA(Gln) amidotransferase complex"/>
    <property type="evidence" value="ECO:0007669"/>
    <property type="project" value="InterPro"/>
</dbReference>
<dbReference type="GO" id="GO:0005524">
    <property type="term" value="F:ATP binding"/>
    <property type="evidence" value="ECO:0007669"/>
    <property type="project" value="UniProtKB-KW"/>
</dbReference>
<dbReference type="GO" id="GO:0050567">
    <property type="term" value="F:glutaminyl-tRNA synthase (glutamine-hydrolyzing) activity"/>
    <property type="evidence" value="ECO:0007669"/>
    <property type="project" value="UniProtKB-UniRule"/>
</dbReference>
<dbReference type="GO" id="GO:0006412">
    <property type="term" value="P:translation"/>
    <property type="evidence" value="ECO:0007669"/>
    <property type="project" value="UniProtKB-UniRule"/>
</dbReference>
<dbReference type="Gene3D" id="3.90.1300.10">
    <property type="entry name" value="Amidase signature (AS) domain"/>
    <property type="match status" value="1"/>
</dbReference>
<dbReference type="HAMAP" id="MF_00120">
    <property type="entry name" value="GatA"/>
    <property type="match status" value="1"/>
</dbReference>
<dbReference type="InterPro" id="IPR000120">
    <property type="entry name" value="Amidase"/>
</dbReference>
<dbReference type="InterPro" id="IPR020556">
    <property type="entry name" value="Amidase_CS"/>
</dbReference>
<dbReference type="InterPro" id="IPR023631">
    <property type="entry name" value="Amidase_dom"/>
</dbReference>
<dbReference type="InterPro" id="IPR036928">
    <property type="entry name" value="AS_sf"/>
</dbReference>
<dbReference type="InterPro" id="IPR004412">
    <property type="entry name" value="GatA"/>
</dbReference>
<dbReference type="NCBIfam" id="TIGR00132">
    <property type="entry name" value="gatA"/>
    <property type="match status" value="1"/>
</dbReference>
<dbReference type="PANTHER" id="PTHR11895:SF151">
    <property type="entry name" value="GLUTAMYL-TRNA(GLN) AMIDOTRANSFERASE SUBUNIT A"/>
    <property type="match status" value="1"/>
</dbReference>
<dbReference type="PANTHER" id="PTHR11895">
    <property type="entry name" value="TRANSAMIDASE"/>
    <property type="match status" value="1"/>
</dbReference>
<dbReference type="Pfam" id="PF01425">
    <property type="entry name" value="Amidase"/>
    <property type="match status" value="1"/>
</dbReference>
<dbReference type="SUPFAM" id="SSF75304">
    <property type="entry name" value="Amidase signature (AS) enzymes"/>
    <property type="match status" value="1"/>
</dbReference>
<dbReference type="PROSITE" id="PS00571">
    <property type="entry name" value="AMIDASES"/>
    <property type="match status" value="1"/>
</dbReference>
<organism>
    <name type="scientific">Nitratidesulfovibrio vulgaris (strain DP4)</name>
    <name type="common">Desulfovibrio vulgaris</name>
    <dbReference type="NCBI Taxonomy" id="391774"/>
    <lineage>
        <taxon>Bacteria</taxon>
        <taxon>Pseudomonadati</taxon>
        <taxon>Thermodesulfobacteriota</taxon>
        <taxon>Desulfovibrionia</taxon>
        <taxon>Desulfovibrionales</taxon>
        <taxon>Desulfovibrionaceae</taxon>
        <taxon>Nitratidesulfovibrio</taxon>
    </lineage>
</organism>
<comment type="function">
    <text evidence="1">Allows the formation of correctly charged Gln-tRNA(Gln) through the transamidation of misacylated Glu-tRNA(Gln) in organisms which lack glutaminyl-tRNA synthetase. The reaction takes place in the presence of glutamine and ATP through an activated gamma-phospho-Glu-tRNA(Gln).</text>
</comment>
<comment type="catalytic activity">
    <reaction evidence="1">
        <text>L-glutamyl-tRNA(Gln) + L-glutamine + ATP + H2O = L-glutaminyl-tRNA(Gln) + L-glutamate + ADP + phosphate + H(+)</text>
        <dbReference type="Rhea" id="RHEA:17521"/>
        <dbReference type="Rhea" id="RHEA-COMP:9681"/>
        <dbReference type="Rhea" id="RHEA-COMP:9684"/>
        <dbReference type="ChEBI" id="CHEBI:15377"/>
        <dbReference type="ChEBI" id="CHEBI:15378"/>
        <dbReference type="ChEBI" id="CHEBI:29985"/>
        <dbReference type="ChEBI" id="CHEBI:30616"/>
        <dbReference type="ChEBI" id="CHEBI:43474"/>
        <dbReference type="ChEBI" id="CHEBI:58359"/>
        <dbReference type="ChEBI" id="CHEBI:78520"/>
        <dbReference type="ChEBI" id="CHEBI:78521"/>
        <dbReference type="ChEBI" id="CHEBI:456216"/>
        <dbReference type="EC" id="6.3.5.7"/>
    </reaction>
</comment>
<comment type="subunit">
    <text evidence="1">Heterotrimer of A, B and C subunits.</text>
</comment>
<comment type="similarity">
    <text evidence="1">Belongs to the amidase family. GatA subfamily.</text>
</comment>
<protein>
    <recommendedName>
        <fullName evidence="1">Glutamyl-tRNA(Gln) amidotransferase subunit A</fullName>
        <shortName evidence="1">Glu-ADT subunit A</shortName>
        <ecNumber evidence="1">6.3.5.7</ecNumber>
    </recommendedName>
</protein>
<name>GATA_NITV4</name>